<feature type="chain" id="PRO_1000201764" description="Adenylosuccinate synthetase">
    <location>
        <begin position="1"/>
        <end position="429"/>
    </location>
</feature>
<feature type="active site" description="Proton acceptor" evidence="1">
    <location>
        <position position="13"/>
    </location>
</feature>
<feature type="active site" description="Proton donor" evidence="1">
    <location>
        <position position="41"/>
    </location>
</feature>
<feature type="binding site" evidence="1">
    <location>
        <begin position="12"/>
        <end position="18"/>
    </location>
    <ligand>
        <name>GTP</name>
        <dbReference type="ChEBI" id="CHEBI:37565"/>
    </ligand>
</feature>
<feature type="binding site" description="in other chain" evidence="1">
    <location>
        <begin position="13"/>
        <end position="16"/>
    </location>
    <ligand>
        <name>IMP</name>
        <dbReference type="ChEBI" id="CHEBI:58053"/>
        <note>ligand shared between dimeric partners</note>
    </ligand>
</feature>
<feature type="binding site" evidence="1">
    <location>
        <position position="13"/>
    </location>
    <ligand>
        <name>Mg(2+)</name>
        <dbReference type="ChEBI" id="CHEBI:18420"/>
    </ligand>
</feature>
<feature type="binding site" description="in other chain" evidence="1">
    <location>
        <begin position="38"/>
        <end position="41"/>
    </location>
    <ligand>
        <name>IMP</name>
        <dbReference type="ChEBI" id="CHEBI:58053"/>
        <note>ligand shared between dimeric partners</note>
    </ligand>
</feature>
<feature type="binding site" evidence="1">
    <location>
        <begin position="40"/>
        <end position="42"/>
    </location>
    <ligand>
        <name>GTP</name>
        <dbReference type="ChEBI" id="CHEBI:37565"/>
    </ligand>
</feature>
<feature type="binding site" evidence="1">
    <location>
        <position position="40"/>
    </location>
    <ligand>
        <name>Mg(2+)</name>
        <dbReference type="ChEBI" id="CHEBI:18420"/>
    </ligand>
</feature>
<feature type="binding site" description="in other chain" evidence="1">
    <location>
        <position position="129"/>
    </location>
    <ligand>
        <name>IMP</name>
        <dbReference type="ChEBI" id="CHEBI:58053"/>
        <note>ligand shared between dimeric partners</note>
    </ligand>
</feature>
<feature type="binding site" evidence="1">
    <location>
        <position position="143"/>
    </location>
    <ligand>
        <name>IMP</name>
        <dbReference type="ChEBI" id="CHEBI:58053"/>
        <note>ligand shared between dimeric partners</note>
    </ligand>
</feature>
<feature type="binding site" description="in other chain" evidence="1">
    <location>
        <position position="224"/>
    </location>
    <ligand>
        <name>IMP</name>
        <dbReference type="ChEBI" id="CHEBI:58053"/>
        <note>ligand shared between dimeric partners</note>
    </ligand>
</feature>
<feature type="binding site" description="in other chain" evidence="1">
    <location>
        <position position="239"/>
    </location>
    <ligand>
        <name>IMP</name>
        <dbReference type="ChEBI" id="CHEBI:58053"/>
        <note>ligand shared between dimeric partners</note>
    </ligand>
</feature>
<feature type="binding site" evidence="1">
    <location>
        <begin position="299"/>
        <end position="305"/>
    </location>
    <ligand>
        <name>substrate</name>
    </ligand>
</feature>
<feature type="binding site" description="in other chain" evidence="1">
    <location>
        <position position="303"/>
    </location>
    <ligand>
        <name>IMP</name>
        <dbReference type="ChEBI" id="CHEBI:58053"/>
        <note>ligand shared between dimeric partners</note>
    </ligand>
</feature>
<feature type="binding site" evidence="1">
    <location>
        <position position="305"/>
    </location>
    <ligand>
        <name>GTP</name>
        <dbReference type="ChEBI" id="CHEBI:37565"/>
    </ligand>
</feature>
<feature type="binding site" evidence="1">
    <location>
        <begin position="331"/>
        <end position="333"/>
    </location>
    <ligand>
        <name>GTP</name>
        <dbReference type="ChEBI" id="CHEBI:37565"/>
    </ligand>
</feature>
<feature type="binding site" evidence="1">
    <location>
        <begin position="413"/>
        <end position="415"/>
    </location>
    <ligand>
        <name>GTP</name>
        <dbReference type="ChEBI" id="CHEBI:37565"/>
    </ligand>
</feature>
<name>PURA_RHOE4</name>
<comment type="function">
    <text evidence="1">Plays an important role in the de novo pathway of purine nucleotide biosynthesis. Catalyzes the first committed step in the biosynthesis of AMP from IMP.</text>
</comment>
<comment type="catalytic activity">
    <reaction evidence="1">
        <text>IMP + L-aspartate + GTP = N(6)-(1,2-dicarboxyethyl)-AMP + GDP + phosphate + 2 H(+)</text>
        <dbReference type="Rhea" id="RHEA:15753"/>
        <dbReference type="ChEBI" id="CHEBI:15378"/>
        <dbReference type="ChEBI" id="CHEBI:29991"/>
        <dbReference type="ChEBI" id="CHEBI:37565"/>
        <dbReference type="ChEBI" id="CHEBI:43474"/>
        <dbReference type="ChEBI" id="CHEBI:57567"/>
        <dbReference type="ChEBI" id="CHEBI:58053"/>
        <dbReference type="ChEBI" id="CHEBI:58189"/>
        <dbReference type="EC" id="6.3.4.4"/>
    </reaction>
</comment>
<comment type="cofactor">
    <cofactor evidence="1">
        <name>Mg(2+)</name>
        <dbReference type="ChEBI" id="CHEBI:18420"/>
    </cofactor>
    <text evidence="1">Binds 1 Mg(2+) ion per subunit.</text>
</comment>
<comment type="pathway">
    <text evidence="1">Purine metabolism; AMP biosynthesis via de novo pathway; AMP from IMP: step 1/2.</text>
</comment>
<comment type="subunit">
    <text evidence="1">Homodimer.</text>
</comment>
<comment type="subcellular location">
    <subcellularLocation>
        <location evidence="1">Cytoplasm</location>
    </subcellularLocation>
</comment>
<comment type="similarity">
    <text evidence="1">Belongs to the adenylosuccinate synthetase family.</text>
</comment>
<reference key="1">
    <citation type="submission" date="2005-03" db="EMBL/GenBank/DDBJ databases">
        <title>Comparison of the complete genome sequences of Rhodococcus erythropolis PR4 and Rhodococcus opacus B4.</title>
        <authorList>
            <person name="Takarada H."/>
            <person name="Sekine M."/>
            <person name="Hosoyama A."/>
            <person name="Yamada R."/>
            <person name="Fujisawa T."/>
            <person name="Omata S."/>
            <person name="Shimizu A."/>
            <person name="Tsukatani N."/>
            <person name="Tanikawa S."/>
            <person name="Fujita N."/>
            <person name="Harayama S."/>
        </authorList>
    </citation>
    <scope>NUCLEOTIDE SEQUENCE [LARGE SCALE GENOMIC DNA]</scope>
    <source>
        <strain>PR4 / NBRC 100887</strain>
    </source>
</reference>
<gene>
    <name evidence="1" type="primary">purA</name>
    <name type="ordered locus">RER_14280</name>
</gene>
<keyword id="KW-0963">Cytoplasm</keyword>
<keyword id="KW-0342">GTP-binding</keyword>
<keyword id="KW-0436">Ligase</keyword>
<keyword id="KW-0460">Magnesium</keyword>
<keyword id="KW-0479">Metal-binding</keyword>
<keyword id="KW-0547">Nucleotide-binding</keyword>
<keyword id="KW-0658">Purine biosynthesis</keyword>
<proteinExistence type="inferred from homology"/>
<protein>
    <recommendedName>
        <fullName evidence="1">Adenylosuccinate synthetase</fullName>
        <shortName evidence="1">AMPSase</shortName>
        <shortName evidence="1">AdSS</shortName>
        <ecNumber evidence="1">6.3.4.4</ecNumber>
    </recommendedName>
    <alternativeName>
        <fullName evidence="1">IMP--aspartate ligase</fullName>
    </alternativeName>
</protein>
<organism>
    <name type="scientific">Rhodococcus erythropolis (strain PR4 / NBRC 100887)</name>
    <dbReference type="NCBI Taxonomy" id="234621"/>
    <lineage>
        <taxon>Bacteria</taxon>
        <taxon>Bacillati</taxon>
        <taxon>Actinomycetota</taxon>
        <taxon>Actinomycetes</taxon>
        <taxon>Mycobacteriales</taxon>
        <taxon>Nocardiaceae</taxon>
        <taxon>Rhodococcus</taxon>
        <taxon>Rhodococcus erythropolis group</taxon>
    </lineage>
</organism>
<dbReference type="EC" id="6.3.4.4" evidence="1"/>
<dbReference type="EMBL" id="AP008957">
    <property type="protein sequence ID" value="BAH32136.1"/>
    <property type="molecule type" value="Genomic_DNA"/>
</dbReference>
<dbReference type="RefSeq" id="WP_003944351.1">
    <property type="nucleotide sequence ID" value="NC_012490.1"/>
</dbReference>
<dbReference type="SMR" id="C0ZTG3"/>
<dbReference type="KEGG" id="rer:RER_14280"/>
<dbReference type="eggNOG" id="COG0104">
    <property type="taxonomic scope" value="Bacteria"/>
</dbReference>
<dbReference type="HOGENOM" id="CLU_029848_0_0_11"/>
<dbReference type="UniPathway" id="UPA00075">
    <property type="reaction ID" value="UER00335"/>
</dbReference>
<dbReference type="Proteomes" id="UP000002204">
    <property type="component" value="Chromosome"/>
</dbReference>
<dbReference type="GO" id="GO:0005737">
    <property type="term" value="C:cytoplasm"/>
    <property type="evidence" value="ECO:0007669"/>
    <property type="project" value="UniProtKB-SubCell"/>
</dbReference>
<dbReference type="GO" id="GO:0004019">
    <property type="term" value="F:adenylosuccinate synthase activity"/>
    <property type="evidence" value="ECO:0007669"/>
    <property type="project" value="UniProtKB-UniRule"/>
</dbReference>
<dbReference type="GO" id="GO:0005525">
    <property type="term" value="F:GTP binding"/>
    <property type="evidence" value="ECO:0007669"/>
    <property type="project" value="UniProtKB-UniRule"/>
</dbReference>
<dbReference type="GO" id="GO:0000287">
    <property type="term" value="F:magnesium ion binding"/>
    <property type="evidence" value="ECO:0007669"/>
    <property type="project" value="UniProtKB-UniRule"/>
</dbReference>
<dbReference type="GO" id="GO:0044208">
    <property type="term" value="P:'de novo' AMP biosynthetic process"/>
    <property type="evidence" value="ECO:0007669"/>
    <property type="project" value="UniProtKB-UniRule"/>
</dbReference>
<dbReference type="GO" id="GO:0046040">
    <property type="term" value="P:IMP metabolic process"/>
    <property type="evidence" value="ECO:0007669"/>
    <property type="project" value="TreeGrafter"/>
</dbReference>
<dbReference type="CDD" id="cd03108">
    <property type="entry name" value="AdSS"/>
    <property type="match status" value="1"/>
</dbReference>
<dbReference type="FunFam" id="1.10.300.10:FF:000001">
    <property type="entry name" value="Adenylosuccinate synthetase"/>
    <property type="match status" value="1"/>
</dbReference>
<dbReference type="FunFam" id="3.90.170.10:FF:000001">
    <property type="entry name" value="Adenylosuccinate synthetase"/>
    <property type="match status" value="1"/>
</dbReference>
<dbReference type="Gene3D" id="3.40.440.10">
    <property type="entry name" value="Adenylosuccinate Synthetase, subunit A, domain 1"/>
    <property type="match status" value="1"/>
</dbReference>
<dbReference type="Gene3D" id="1.10.300.10">
    <property type="entry name" value="Adenylosuccinate Synthetase, subunit A, domain 2"/>
    <property type="match status" value="1"/>
</dbReference>
<dbReference type="Gene3D" id="3.90.170.10">
    <property type="entry name" value="Adenylosuccinate Synthetase, subunit A, domain 3"/>
    <property type="match status" value="1"/>
</dbReference>
<dbReference type="HAMAP" id="MF_00011">
    <property type="entry name" value="Adenylosucc_synth"/>
    <property type="match status" value="1"/>
</dbReference>
<dbReference type="InterPro" id="IPR018220">
    <property type="entry name" value="Adenylosuccin_syn_GTP-bd"/>
</dbReference>
<dbReference type="InterPro" id="IPR033128">
    <property type="entry name" value="Adenylosuccin_syn_Lys_AS"/>
</dbReference>
<dbReference type="InterPro" id="IPR042109">
    <property type="entry name" value="Adenylosuccinate_synth_dom1"/>
</dbReference>
<dbReference type="InterPro" id="IPR042110">
    <property type="entry name" value="Adenylosuccinate_synth_dom2"/>
</dbReference>
<dbReference type="InterPro" id="IPR042111">
    <property type="entry name" value="Adenylosuccinate_synth_dom3"/>
</dbReference>
<dbReference type="InterPro" id="IPR001114">
    <property type="entry name" value="Adenylosuccinate_synthetase"/>
</dbReference>
<dbReference type="InterPro" id="IPR027417">
    <property type="entry name" value="P-loop_NTPase"/>
</dbReference>
<dbReference type="NCBIfam" id="NF002223">
    <property type="entry name" value="PRK01117.1"/>
    <property type="match status" value="1"/>
</dbReference>
<dbReference type="NCBIfam" id="TIGR00184">
    <property type="entry name" value="purA"/>
    <property type="match status" value="1"/>
</dbReference>
<dbReference type="PANTHER" id="PTHR11846">
    <property type="entry name" value="ADENYLOSUCCINATE SYNTHETASE"/>
    <property type="match status" value="1"/>
</dbReference>
<dbReference type="PANTHER" id="PTHR11846:SF0">
    <property type="entry name" value="ADENYLOSUCCINATE SYNTHETASE"/>
    <property type="match status" value="1"/>
</dbReference>
<dbReference type="Pfam" id="PF00709">
    <property type="entry name" value="Adenylsucc_synt"/>
    <property type="match status" value="1"/>
</dbReference>
<dbReference type="SMART" id="SM00788">
    <property type="entry name" value="Adenylsucc_synt"/>
    <property type="match status" value="1"/>
</dbReference>
<dbReference type="SUPFAM" id="SSF52540">
    <property type="entry name" value="P-loop containing nucleoside triphosphate hydrolases"/>
    <property type="match status" value="1"/>
</dbReference>
<dbReference type="PROSITE" id="PS01266">
    <property type="entry name" value="ADENYLOSUCCIN_SYN_1"/>
    <property type="match status" value="1"/>
</dbReference>
<dbReference type="PROSITE" id="PS00513">
    <property type="entry name" value="ADENYLOSUCCIN_SYN_2"/>
    <property type="match status" value="1"/>
</dbReference>
<sequence>MPAIVLIGAQWGDEGKGKATDLLGEQLQWVVRYQGGNNAGHTVVLPNGDKFALHLIPSGILTPAVNNVIGNGVVVDPGVLLTELAGLEERGVDTSRLLLSADAHLIMPYHVAIDKVTERFLGAKKIGTTGRGIGPCYQDKIARVGVRAADVLDEKILTQKVEAALEFKNQVLVKIYNRKALDPQQVVEEVLTQAEGFKHRISDTRLELNLALERGETVLLEGSQGTLLDVDHGTYPYVTSSNPTSGGAAVGSGIGPTKITTVLGILKAYTTRVGSGPFPTELFDDHGAYLAKQGGEVGVTTGRARRTGWFDAVIARYATRVNGITDYFLTKLDVLSSLDTVPICVAYEVDGVRHDEMPMSQSDIHHAKPIYEEMPGWWEDISEARTFEELPQNAQNYVLRLEELSGAFISCIGVGPGRDETIVRREIVR</sequence>
<accession>C0ZTG3</accession>
<evidence type="ECO:0000255" key="1">
    <source>
        <dbReference type="HAMAP-Rule" id="MF_00011"/>
    </source>
</evidence>